<sequence>MGVPDCLALPLLVTFLLLSLGLPVLGAPPRLICDSRVLERYILEAKEAENITMGCAEGPRFNENFTVPDTKVNFYAWKTMGVEEQAVEVWQGLSLLFEAILRAQAVLANSSQPSEMLQLHVDKAISGLRSLTSLLRALGAQKEAISPPDTTQVIPLRRFTVDTFCKLFRIYSNFLRGKLKLYTGEACRRGDR</sequence>
<gene>
    <name type="primary">EPO</name>
</gene>
<name>EPO_SPAJD</name>
<proteinExistence type="evidence at transcript level"/>
<organism>
    <name type="scientific">Spalax judaei</name>
    <name type="common">Judean Mountains blind mole rat</name>
    <name type="synonym">Nannospalax judaei</name>
    <dbReference type="NCBI Taxonomy" id="134510"/>
    <lineage>
        <taxon>Eukaryota</taxon>
        <taxon>Metazoa</taxon>
        <taxon>Chordata</taxon>
        <taxon>Craniata</taxon>
        <taxon>Vertebrata</taxon>
        <taxon>Euteleostomi</taxon>
        <taxon>Mammalia</taxon>
        <taxon>Eutheria</taxon>
        <taxon>Euarchontoglires</taxon>
        <taxon>Glires</taxon>
        <taxon>Rodentia</taxon>
        <taxon>Myomorpha</taxon>
        <taxon>Muroidea</taxon>
        <taxon>Spalacidae</taxon>
        <taxon>Spalacinae</taxon>
        <taxon>Nannospalax</taxon>
    </lineage>
</organism>
<reference key="1">
    <citation type="journal article" date="2004" name="Proc. Natl. Acad. Sci. U.S.A.">
        <title>Hypoxic stress tolerance of the blind subterranean mole rat: expression of erythropoietin and hypoxia-inducible factor 1 alpha.</title>
        <authorList>
            <person name="Shams I."/>
            <person name="Avivi A."/>
            <person name="Eviatar N."/>
        </authorList>
    </citation>
    <scope>NUCLEOTIDE SEQUENCE [GENOMIC DNA]</scope>
    <source>
        <tissue>Liver</tissue>
    </source>
</reference>
<protein>
    <recommendedName>
        <fullName>Erythropoietin</fullName>
    </recommendedName>
</protein>
<evidence type="ECO:0000250" key="1"/>
<evidence type="ECO:0000250" key="2">
    <source>
        <dbReference type="UniProtKB" id="P01588"/>
    </source>
</evidence>
<evidence type="ECO:0000255" key="3"/>
<evidence type="ECO:0000305" key="4"/>
<accession>Q6H8T0</accession>
<dbReference type="EMBL" id="AJ715794">
    <property type="protein sequence ID" value="CAG29399.1"/>
    <property type="molecule type" value="Genomic_DNA"/>
</dbReference>
<dbReference type="SMR" id="Q6H8T0"/>
<dbReference type="GlyCosmos" id="Q6H8T0">
    <property type="glycosylation" value="3 sites, No reported glycans"/>
</dbReference>
<dbReference type="GO" id="GO:0005615">
    <property type="term" value="C:extracellular space"/>
    <property type="evidence" value="ECO:0007669"/>
    <property type="project" value="TreeGrafter"/>
</dbReference>
<dbReference type="GO" id="GO:0005125">
    <property type="term" value="F:cytokine activity"/>
    <property type="evidence" value="ECO:0007669"/>
    <property type="project" value="TreeGrafter"/>
</dbReference>
<dbReference type="GO" id="GO:0005128">
    <property type="term" value="F:erythropoietin receptor binding"/>
    <property type="evidence" value="ECO:0007669"/>
    <property type="project" value="InterPro"/>
</dbReference>
<dbReference type="GO" id="GO:0005179">
    <property type="term" value="F:hormone activity"/>
    <property type="evidence" value="ECO:0007669"/>
    <property type="project" value="UniProtKB-KW"/>
</dbReference>
<dbReference type="GO" id="GO:0030295">
    <property type="term" value="F:protein kinase activator activity"/>
    <property type="evidence" value="ECO:0007669"/>
    <property type="project" value="TreeGrafter"/>
</dbReference>
<dbReference type="GO" id="GO:0043249">
    <property type="term" value="P:erythrocyte maturation"/>
    <property type="evidence" value="ECO:0007669"/>
    <property type="project" value="UniProtKB-KW"/>
</dbReference>
<dbReference type="GO" id="GO:0038162">
    <property type="term" value="P:erythropoietin-mediated signaling pathway"/>
    <property type="evidence" value="ECO:0007669"/>
    <property type="project" value="TreeGrafter"/>
</dbReference>
<dbReference type="GO" id="GO:0008284">
    <property type="term" value="P:positive regulation of cell population proliferation"/>
    <property type="evidence" value="ECO:0007669"/>
    <property type="project" value="TreeGrafter"/>
</dbReference>
<dbReference type="GO" id="GO:0046579">
    <property type="term" value="P:positive regulation of Ras protein signal transduction"/>
    <property type="evidence" value="ECO:0007669"/>
    <property type="project" value="TreeGrafter"/>
</dbReference>
<dbReference type="FunFam" id="1.20.1250.10:FF:000013">
    <property type="entry name" value="Erythropoietin"/>
    <property type="match status" value="1"/>
</dbReference>
<dbReference type="Gene3D" id="1.20.1250.10">
    <property type="match status" value="1"/>
</dbReference>
<dbReference type="InterPro" id="IPR009079">
    <property type="entry name" value="4_helix_cytokine-like_core"/>
</dbReference>
<dbReference type="InterPro" id="IPR019767">
    <property type="entry name" value="EPO/TPO_CS"/>
</dbReference>
<dbReference type="InterPro" id="IPR001323">
    <property type="entry name" value="EPO_TPO"/>
</dbReference>
<dbReference type="InterPro" id="IPR003013">
    <property type="entry name" value="Erythroptn"/>
</dbReference>
<dbReference type="PANTHER" id="PTHR10370">
    <property type="entry name" value="ERYTHROPOIETIN"/>
    <property type="match status" value="1"/>
</dbReference>
<dbReference type="PANTHER" id="PTHR10370:SF0">
    <property type="entry name" value="ERYTHROPOIETIN"/>
    <property type="match status" value="1"/>
</dbReference>
<dbReference type="Pfam" id="PF00758">
    <property type="entry name" value="EPO_TPO"/>
    <property type="match status" value="1"/>
</dbReference>
<dbReference type="PIRSF" id="PIRSF001951">
    <property type="entry name" value="EPO"/>
    <property type="match status" value="1"/>
</dbReference>
<dbReference type="PRINTS" id="PR00272">
    <property type="entry name" value="ERYTHROPTN"/>
</dbReference>
<dbReference type="SUPFAM" id="SSF47266">
    <property type="entry name" value="4-helical cytokines"/>
    <property type="match status" value="1"/>
</dbReference>
<dbReference type="PROSITE" id="PS00817">
    <property type="entry name" value="EPO_TPO"/>
    <property type="match status" value="1"/>
</dbReference>
<comment type="function">
    <text evidence="2">Hormone involved in the regulation of erythrocyte proliferation and differentiation and the maintenance of a physiological level of circulating erythrocyte mass. Binds to EPOR leading to EPOR dimerization and JAK2 activation thereby activating specific downstream effectors, including STAT1 and STAT3.</text>
</comment>
<comment type="subcellular location">
    <subcellularLocation>
        <location evidence="1">Secreted</location>
    </subcellularLocation>
</comment>
<comment type="tissue specificity">
    <text>Produced by kidney or liver of adult mammals and by liver of fetal or neonatal mammals.</text>
</comment>
<comment type="similarity">
    <text evidence="4">Belongs to the EPO/TPO family.</text>
</comment>
<feature type="signal peptide" evidence="3">
    <location>
        <begin position="1"/>
        <end position="26"/>
    </location>
</feature>
<feature type="chain" id="PRO_0000313664" description="Erythropoietin">
    <location>
        <begin position="27"/>
        <end position="192"/>
    </location>
</feature>
<feature type="glycosylation site" description="N-linked (GlcNAc...) asparagine" evidence="3">
    <location>
        <position position="50"/>
    </location>
</feature>
<feature type="glycosylation site" description="N-linked (GlcNAc...) asparagine" evidence="3">
    <location>
        <position position="64"/>
    </location>
</feature>
<feature type="glycosylation site" description="N-linked (GlcNAc...) asparagine" evidence="3">
    <location>
        <position position="109"/>
    </location>
</feature>
<feature type="disulfide bond" evidence="1">
    <location>
        <begin position="33"/>
        <end position="187"/>
    </location>
</feature>
<keyword id="KW-1015">Disulfide bond</keyword>
<keyword id="KW-0265">Erythrocyte maturation</keyword>
<keyword id="KW-0325">Glycoprotein</keyword>
<keyword id="KW-0372">Hormone</keyword>
<keyword id="KW-0964">Secreted</keyword>
<keyword id="KW-0732">Signal</keyword>